<feature type="chain" id="PRO_0000321739" description="Ribosome maturation factor RimM">
    <location>
        <begin position="1"/>
        <end position="188"/>
    </location>
</feature>
<feature type="domain" description="PRC barrel" evidence="1">
    <location>
        <begin position="98"/>
        <end position="171"/>
    </location>
</feature>
<keyword id="KW-0143">Chaperone</keyword>
<keyword id="KW-0963">Cytoplasm</keyword>
<keyword id="KW-1185">Reference proteome</keyword>
<keyword id="KW-0690">Ribosome biogenesis</keyword>
<keyword id="KW-0698">rRNA processing</keyword>
<reference key="1">
    <citation type="journal article" date="2006" name="Proc. Natl. Acad. Sci. U.S.A.">
        <title>Evolution of sensory complexity recorded in a myxobacterial genome.</title>
        <authorList>
            <person name="Goldman B.S."/>
            <person name="Nierman W.C."/>
            <person name="Kaiser D."/>
            <person name="Slater S.C."/>
            <person name="Durkin A.S."/>
            <person name="Eisen J.A."/>
            <person name="Ronning C.M."/>
            <person name="Barbazuk W.B."/>
            <person name="Blanchard M."/>
            <person name="Field C."/>
            <person name="Halling C."/>
            <person name="Hinkle G."/>
            <person name="Iartchuk O."/>
            <person name="Kim H.S."/>
            <person name="Mackenzie C."/>
            <person name="Madupu R."/>
            <person name="Miller N."/>
            <person name="Shvartsbeyn A."/>
            <person name="Sullivan S.A."/>
            <person name="Vaudin M."/>
            <person name="Wiegand R."/>
            <person name="Kaplan H.B."/>
        </authorList>
    </citation>
    <scope>NUCLEOTIDE SEQUENCE [LARGE SCALE GENOMIC DNA]</scope>
    <source>
        <strain>DK1622</strain>
    </source>
</reference>
<sequence>MTATSPYLELGYVARAHGLRGEVAIRALDPASETLDTVDRIWVRTRAGVEREMRLEALRPTPKEDIVVLEGVESRNDAEALVGAKVFVFREDLEPPAEGEFFQGDLVGLDAVDANGNALGRVEEIWTTGEVPNLVIRASGREELVVPFADEFVPTVDLEARRIVIHPPEYVEAGRKGAESGGGPEDAE</sequence>
<name>RIMM_MYXXD</name>
<proteinExistence type="inferred from homology"/>
<evidence type="ECO:0000255" key="1">
    <source>
        <dbReference type="HAMAP-Rule" id="MF_00014"/>
    </source>
</evidence>
<organism>
    <name type="scientific">Myxococcus xanthus (strain DK1622)</name>
    <dbReference type="NCBI Taxonomy" id="246197"/>
    <lineage>
        <taxon>Bacteria</taxon>
        <taxon>Pseudomonadati</taxon>
        <taxon>Myxococcota</taxon>
        <taxon>Myxococcia</taxon>
        <taxon>Myxococcales</taxon>
        <taxon>Cystobacterineae</taxon>
        <taxon>Myxococcaceae</taxon>
        <taxon>Myxococcus</taxon>
    </lineage>
</organism>
<comment type="function">
    <text evidence="1">An accessory protein needed during the final step in the assembly of 30S ribosomal subunit, possibly for assembly of the head region. Essential for efficient processing of 16S rRNA. May be needed both before and after RbfA during the maturation of 16S rRNA. It has affinity for free ribosomal 30S subunits but not for 70S ribosomes.</text>
</comment>
<comment type="subunit">
    <text evidence="1">Binds ribosomal protein uS19.</text>
</comment>
<comment type="subcellular location">
    <subcellularLocation>
        <location evidence="1">Cytoplasm</location>
    </subcellularLocation>
</comment>
<comment type="domain">
    <text evidence="1">The PRC barrel domain binds ribosomal protein uS19.</text>
</comment>
<comment type="similarity">
    <text evidence="1">Belongs to the RimM family.</text>
</comment>
<accession>Q1D6I3</accession>
<gene>
    <name evidence="1" type="primary">rimM</name>
    <name type="ordered locus">MXAN_3547</name>
</gene>
<protein>
    <recommendedName>
        <fullName evidence="1">Ribosome maturation factor RimM</fullName>
    </recommendedName>
</protein>
<dbReference type="EMBL" id="CP000113">
    <property type="protein sequence ID" value="ABF89241.1"/>
    <property type="molecule type" value="Genomic_DNA"/>
</dbReference>
<dbReference type="RefSeq" id="WP_011553576.1">
    <property type="nucleotide sequence ID" value="NC_008095.1"/>
</dbReference>
<dbReference type="SMR" id="Q1D6I3"/>
<dbReference type="STRING" id="246197.MXAN_3547"/>
<dbReference type="EnsemblBacteria" id="ABF89241">
    <property type="protein sequence ID" value="ABF89241"/>
    <property type="gene ID" value="MXAN_3547"/>
</dbReference>
<dbReference type="GeneID" id="41360892"/>
<dbReference type="KEGG" id="mxa:MXAN_3547"/>
<dbReference type="eggNOG" id="COG0806">
    <property type="taxonomic scope" value="Bacteria"/>
</dbReference>
<dbReference type="HOGENOM" id="CLU_077636_0_1_7"/>
<dbReference type="OrthoDB" id="5381335at2"/>
<dbReference type="Proteomes" id="UP000002402">
    <property type="component" value="Chromosome"/>
</dbReference>
<dbReference type="GO" id="GO:0005737">
    <property type="term" value="C:cytoplasm"/>
    <property type="evidence" value="ECO:0007669"/>
    <property type="project" value="UniProtKB-SubCell"/>
</dbReference>
<dbReference type="GO" id="GO:0005840">
    <property type="term" value="C:ribosome"/>
    <property type="evidence" value="ECO:0007669"/>
    <property type="project" value="InterPro"/>
</dbReference>
<dbReference type="GO" id="GO:0043022">
    <property type="term" value="F:ribosome binding"/>
    <property type="evidence" value="ECO:0007669"/>
    <property type="project" value="InterPro"/>
</dbReference>
<dbReference type="GO" id="GO:0042274">
    <property type="term" value="P:ribosomal small subunit biogenesis"/>
    <property type="evidence" value="ECO:0007669"/>
    <property type="project" value="UniProtKB-UniRule"/>
</dbReference>
<dbReference type="GO" id="GO:0006364">
    <property type="term" value="P:rRNA processing"/>
    <property type="evidence" value="ECO:0007669"/>
    <property type="project" value="UniProtKB-UniRule"/>
</dbReference>
<dbReference type="Gene3D" id="2.30.30.240">
    <property type="entry name" value="PRC-barrel domain"/>
    <property type="match status" value="1"/>
</dbReference>
<dbReference type="Gene3D" id="2.40.30.60">
    <property type="entry name" value="RimM"/>
    <property type="match status" value="1"/>
</dbReference>
<dbReference type="HAMAP" id="MF_00014">
    <property type="entry name" value="Ribosome_mat_RimM"/>
    <property type="match status" value="1"/>
</dbReference>
<dbReference type="InterPro" id="IPR011033">
    <property type="entry name" value="PRC_barrel-like_sf"/>
</dbReference>
<dbReference type="InterPro" id="IPR056792">
    <property type="entry name" value="PRC_RimM"/>
</dbReference>
<dbReference type="InterPro" id="IPR011961">
    <property type="entry name" value="RimM"/>
</dbReference>
<dbReference type="InterPro" id="IPR002676">
    <property type="entry name" value="RimM_N"/>
</dbReference>
<dbReference type="InterPro" id="IPR036976">
    <property type="entry name" value="RimM_N_sf"/>
</dbReference>
<dbReference type="InterPro" id="IPR009000">
    <property type="entry name" value="Transl_B-barrel_sf"/>
</dbReference>
<dbReference type="NCBIfam" id="TIGR02273">
    <property type="entry name" value="16S_RimM"/>
    <property type="match status" value="1"/>
</dbReference>
<dbReference type="PANTHER" id="PTHR33692">
    <property type="entry name" value="RIBOSOME MATURATION FACTOR RIMM"/>
    <property type="match status" value="1"/>
</dbReference>
<dbReference type="PANTHER" id="PTHR33692:SF1">
    <property type="entry name" value="RIBOSOME MATURATION FACTOR RIMM"/>
    <property type="match status" value="1"/>
</dbReference>
<dbReference type="Pfam" id="PF24986">
    <property type="entry name" value="PRC_RimM"/>
    <property type="match status" value="1"/>
</dbReference>
<dbReference type="Pfam" id="PF01782">
    <property type="entry name" value="RimM"/>
    <property type="match status" value="1"/>
</dbReference>
<dbReference type="SUPFAM" id="SSF50346">
    <property type="entry name" value="PRC-barrel domain"/>
    <property type="match status" value="1"/>
</dbReference>
<dbReference type="SUPFAM" id="SSF50447">
    <property type="entry name" value="Translation proteins"/>
    <property type="match status" value="1"/>
</dbReference>